<protein>
    <recommendedName>
        <fullName>Photosystem I reaction center subunit III, chloroplastic</fullName>
    </recommendedName>
    <alternativeName>
        <fullName>Light-harvesting complex I 17 kDa protein</fullName>
    </alternativeName>
    <alternativeName>
        <fullName>PSI-F</fullName>
    </alternativeName>
</protein>
<organism>
    <name type="scientific">Hordeum vulgare</name>
    <name type="common">Barley</name>
    <dbReference type="NCBI Taxonomy" id="4513"/>
    <lineage>
        <taxon>Eukaryota</taxon>
        <taxon>Viridiplantae</taxon>
        <taxon>Streptophyta</taxon>
        <taxon>Embryophyta</taxon>
        <taxon>Tracheophyta</taxon>
        <taxon>Spermatophyta</taxon>
        <taxon>Magnoliopsida</taxon>
        <taxon>Liliopsida</taxon>
        <taxon>Poales</taxon>
        <taxon>Poaceae</taxon>
        <taxon>BOP clade</taxon>
        <taxon>Pooideae</taxon>
        <taxon>Triticodae</taxon>
        <taxon>Triticeae</taxon>
        <taxon>Hordeinae</taxon>
        <taxon>Hordeum</taxon>
    </lineage>
</organism>
<dbReference type="EMBL" id="U08135">
    <property type="protein sequence ID" value="AAA68147.1"/>
    <property type="molecule type" value="mRNA"/>
</dbReference>
<dbReference type="PIR" id="S51813">
    <property type="entry name" value="S51813"/>
</dbReference>
<dbReference type="PDB" id="7EW6">
    <property type="method" value="EM"/>
    <property type="resolution" value="3.40 A"/>
    <property type="chains" value="F=1-235"/>
</dbReference>
<dbReference type="PDB" id="7EWK">
    <property type="method" value="EM"/>
    <property type="resolution" value="3.88 A"/>
    <property type="chains" value="F=78-235"/>
</dbReference>
<dbReference type="PDB" id="7F9O">
    <property type="method" value="EM"/>
    <property type="resolution" value="4.50 A"/>
    <property type="chains" value="F/j=1-235"/>
</dbReference>
<dbReference type="PDBsum" id="7EW6"/>
<dbReference type="PDBsum" id="7EWK"/>
<dbReference type="PDBsum" id="7F9O"/>
<dbReference type="EMDB" id="EMD-31348"/>
<dbReference type="EMDB" id="EMD-31350"/>
<dbReference type="EMDB" id="EMD-31498"/>
<dbReference type="SMR" id="P13192"/>
<dbReference type="ExpressionAtlas" id="P13192">
    <property type="expression patterns" value="baseline and differential"/>
</dbReference>
<dbReference type="GO" id="GO:0009543">
    <property type="term" value="C:chloroplast thylakoid lumen"/>
    <property type="evidence" value="ECO:0007669"/>
    <property type="project" value="UniProtKB-SubCell"/>
</dbReference>
<dbReference type="GO" id="GO:0009535">
    <property type="term" value="C:chloroplast thylakoid membrane"/>
    <property type="evidence" value="ECO:0007669"/>
    <property type="project" value="TreeGrafter"/>
</dbReference>
<dbReference type="GO" id="GO:0009538">
    <property type="term" value="C:photosystem I reaction center"/>
    <property type="evidence" value="ECO:0007669"/>
    <property type="project" value="InterPro"/>
</dbReference>
<dbReference type="GO" id="GO:0015979">
    <property type="term" value="P:photosynthesis"/>
    <property type="evidence" value="ECO:0007669"/>
    <property type="project" value="UniProtKB-KW"/>
</dbReference>
<dbReference type="FunFam" id="1.10.8.110:FF:000001">
    <property type="entry name" value="Photosystem I reaction center subunit III"/>
    <property type="match status" value="1"/>
</dbReference>
<dbReference type="Gene3D" id="1.10.8.110">
    <property type="entry name" value="Photosystem I PsaF, reaction centre subunit III"/>
    <property type="match status" value="1"/>
</dbReference>
<dbReference type="InterPro" id="IPR003666">
    <property type="entry name" value="PSI_PsaF"/>
</dbReference>
<dbReference type="InterPro" id="IPR036577">
    <property type="entry name" value="PSI_PsaF_sf"/>
</dbReference>
<dbReference type="PANTHER" id="PTHR34939">
    <property type="entry name" value="PHOTOSYSTEM I REACTION CENTER SUBUNIT III, CHLOROPLASTIC"/>
    <property type="match status" value="1"/>
</dbReference>
<dbReference type="PANTHER" id="PTHR34939:SF1">
    <property type="entry name" value="PHOTOSYSTEM I REACTION CENTER SUBUNIT III, CHLOROPLASTIC"/>
    <property type="match status" value="1"/>
</dbReference>
<dbReference type="Pfam" id="PF02507">
    <property type="entry name" value="PSI_PsaF"/>
    <property type="match status" value="1"/>
</dbReference>
<dbReference type="SUPFAM" id="SSF81536">
    <property type="entry name" value="Subunit III of photosystem I reaction centre, PsaF"/>
    <property type="match status" value="1"/>
</dbReference>
<proteinExistence type="evidence at protein level"/>
<sequence>MAALAASIATSTAFAAKPRLSRPPARLSVSCSASSGDNNNSTATPSLSASIKTFSAALALSSVLLSSAATSPPPAAADIAGLTPCKESKAFAKREKQSVKKLNSSLKKYAPDSAPALAIQATIDKTKRRFENYGKFGLLCGSDGLPHLIVSGDQRHWGEFITPGVLFLYIAGWIGWVGRSYLIAVSGEKKPAMREIIIDVELAARIIPRGFIWPVAAYRELINGDLVVDDADIGY</sequence>
<keyword id="KW-0002">3D-structure</keyword>
<keyword id="KW-0150">Chloroplast</keyword>
<keyword id="KW-0903">Direct protein sequencing</keyword>
<keyword id="KW-0602">Photosynthesis</keyword>
<keyword id="KW-0603">Photosystem I</keyword>
<keyword id="KW-0934">Plastid</keyword>
<keyword id="KW-0793">Thylakoid</keyword>
<keyword id="KW-0809">Transit peptide</keyword>
<gene>
    <name type="primary">PSAF</name>
</gene>
<comment type="function">
    <text>Probably participates in efficiency of electron transfer from plastocyanin to P700 (or cytochrome c553 in algae and cyanobacteria). This plastocyanin-docking protein contributes to the specific association of plastocyanin to PSI.</text>
</comment>
<comment type="subcellular location">
    <subcellularLocation>
        <location>Plastid</location>
        <location>Chloroplast thylakoid lumen</location>
    </subcellularLocation>
</comment>
<comment type="similarity">
    <text evidence="2">Belongs to the PsaF family.</text>
</comment>
<name>PSAF_HORVU</name>
<evidence type="ECO:0000269" key="1">
    <source>
    </source>
</evidence>
<evidence type="ECO:0000305" key="2"/>
<evidence type="ECO:0007829" key="3">
    <source>
        <dbReference type="PDB" id="7EW6"/>
    </source>
</evidence>
<reference key="1">
    <citation type="journal article" date="1994" name="Plant Mol. Biol.">
        <title>Import of the barley PSI-F subunit into the thylakoid lumen of isolated chloroplasts.</title>
        <authorList>
            <person name="Scott M.P."/>
            <person name="Nielsen V.S."/>
            <person name="Knoetzel J."/>
            <person name="Andersen R."/>
            <person name="Moller B.L."/>
        </authorList>
    </citation>
    <scope>NUCLEOTIDE SEQUENCE [MRNA]</scope>
</reference>
<reference key="2">
    <citation type="journal article" date="1989" name="FEBS Lett.">
        <title>Correlation of some published amino acid sequences for photosystem I polypeptides to a 17 kDa LHCI pigment-protein and to subunits III and IV of the core complex.</title>
        <authorList>
            <person name="Anandan S."/>
            <person name="Vainstein A."/>
            <person name="Thornber J.P."/>
        </authorList>
    </citation>
    <scope>PROTEIN SEQUENCE OF 78-98</scope>
    <source>
        <strain>cv. Prato</strain>
    </source>
</reference>
<accession>P13192</accession>
<feature type="transit peptide" description="Chloroplast" evidence="1">
    <location>
        <begin position="1"/>
        <end position="77"/>
    </location>
</feature>
<feature type="chain" id="PRO_0000029345" description="Photosystem I reaction center subunit III, chloroplastic">
    <location>
        <begin position="78"/>
        <end position="235"/>
    </location>
</feature>
<feature type="sequence conflict" description="In Ref. 2; AA sequence." evidence="2" ref="2">
    <original>C</original>
    <variation>A</variation>
    <location>
        <position position="85"/>
    </location>
</feature>
<feature type="sequence conflict" description="In Ref. 2; AA sequence." evidence="2" ref="2">
    <original>S</original>
    <variation>E</variation>
    <location>
        <position position="88"/>
    </location>
</feature>
<feature type="sequence conflict" description="In Ref. 2; AA sequence." evidence="2" ref="2">
    <original>F</original>
    <variation>A</variation>
    <location>
        <position position="91"/>
    </location>
</feature>
<feature type="sequence conflict" description="In Ref. 2; AA sequence." evidence="2" ref="2">
    <original>REKQ</original>
    <variation>HEQD</variation>
    <location>
        <begin position="94"/>
        <end position="97"/>
    </location>
</feature>
<feature type="helix" evidence="3">
    <location>
        <begin position="79"/>
        <end position="81"/>
    </location>
</feature>
<feature type="turn" evidence="3">
    <location>
        <begin position="85"/>
        <end position="87"/>
    </location>
</feature>
<feature type="helix" evidence="3">
    <location>
        <begin position="91"/>
        <end position="106"/>
    </location>
</feature>
<feature type="helix" evidence="3">
    <location>
        <begin position="114"/>
        <end position="133"/>
    </location>
</feature>
<feature type="turn" evidence="3">
    <location>
        <begin position="134"/>
        <end position="137"/>
    </location>
</feature>
<feature type="strand" evidence="3">
    <location>
        <begin position="146"/>
        <end position="148"/>
    </location>
</feature>
<feature type="turn" evidence="3">
    <location>
        <begin position="158"/>
        <end position="160"/>
    </location>
</feature>
<feature type="helix" evidence="3">
    <location>
        <begin position="161"/>
        <end position="186"/>
    </location>
</feature>
<feature type="strand" evidence="3">
    <location>
        <begin position="187"/>
        <end position="189"/>
    </location>
</feature>
<feature type="helix" evidence="3">
    <location>
        <begin position="193"/>
        <end position="196"/>
    </location>
</feature>
<feature type="turn" evidence="3">
    <location>
        <begin position="200"/>
        <end position="206"/>
    </location>
</feature>
<feature type="helix" evidence="3">
    <location>
        <begin position="207"/>
        <end position="211"/>
    </location>
</feature>
<feature type="helix" evidence="3">
    <location>
        <begin position="213"/>
        <end position="223"/>
    </location>
</feature>